<sequence length="361" mass="41306">MKPSIHSLAHQTMQEWVLEQGEKKFRADQIWEWLYRKRVQSFEEMTNLSKDLIAKLNDQFVVNPLKQRIVQESADGTVKYLFELPDGMLIETVLMRQHYGLSVCVTTQVDCNIGCTFCASDLIKKQRDLNNGEIVAQIMLVQKYFAERGQDERVSHIVVMGIGEPFDNYNNVLNFVCTINDDKGMAIGARHITVSTSGLAHKIRNFADEGVQVNLAVSLHAPNNELRSSIMKINRAFPIEKLFAAIEYYIETTNRRVTFEYIMLNEVNDSVEQALELAELLKNIKKLSYVNLIPYNPVSEHDQYSRSPKERVLAFYDTLKKKGGNCVVRQEYGTDIDAACGQLRSNTMKRDRQKAVAEVNP</sequence>
<accession>Q04LD5</accession>
<comment type="function">
    <text evidence="1">Specifically methylates position 2 of adenine 2503 in 23S rRNA and position 2 of adenine 37 in tRNAs.</text>
</comment>
<comment type="catalytic activity">
    <reaction evidence="1">
        <text>adenosine(2503) in 23S rRNA + 2 reduced [2Fe-2S]-[ferredoxin] + 2 S-adenosyl-L-methionine = 2-methyladenosine(2503) in 23S rRNA + 5'-deoxyadenosine + L-methionine + 2 oxidized [2Fe-2S]-[ferredoxin] + S-adenosyl-L-homocysteine</text>
        <dbReference type="Rhea" id="RHEA:42916"/>
        <dbReference type="Rhea" id="RHEA-COMP:10000"/>
        <dbReference type="Rhea" id="RHEA-COMP:10001"/>
        <dbReference type="Rhea" id="RHEA-COMP:10152"/>
        <dbReference type="Rhea" id="RHEA-COMP:10282"/>
        <dbReference type="ChEBI" id="CHEBI:17319"/>
        <dbReference type="ChEBI" id="CHEBI:33737"/>
        <dbReference type="ChEBI" id="CHEBI:33738"/>
        <dbReference type="ChEBI" id="CHEBI:57844"/>
        <dbReference type="ChEBI" id="CHEBI:57856"/>
        <dbReference type="ChEBI" id="CHEBI:59789"/>
        <dbReference type="ChEBI" id="CHEBI:74411"/>
        <dbReference type="ChEBI" id="CHEBI:74497"/>
        <dbReference type="EC" id="2.1.1.192"/>
    </reaction>
</comment>
<comment type="catalytic activity">
    <reaction evidence="1">
        <text>adenosine(37) in tRNA + 2 reduced [2Fe-2S]-[ferredoxin] + 2 S-adenosyl-L-methionine = 2-methyladenosine(37) in tRNA + 5'-deoxyadenosine + L-methionine + 2 oxidized [2Fe-2S]-[ferredoxin] + S-adenosyl-L-homocysteine</text>
        <dbReference type="Rhea" id="RHEA:43332"/>
        <dbReference type="Rhea" id="RHEA-COMP:10000"/>
        <dbReference type="Rhea" id="RHEA-COMP:10001"/>
        <dbReference type="Rhea" id="RHEA-COMP:10162"/>
        <dbReference type="Rhea" id="RHEA-COMP:10485"/>
        <dbReference type="ChEBI" id="CHEBI:17319"/>
        <dbReference type="ChEBI" id="CHEBI:33737"/>
        <dbReference type="ChEBI" id="CHEBI:33738"/>
        <dbReference type="ChEBI" id="CHEBI:57844"/>
        <dbReference type="ChEBI" id="CHEBI:57856"/>
        <dbReference type="ChEBI" id="CHEBI:59789"/>
        <dbReference type="ChEBI" id="CHEBI:74411"/>
        <dbReference type="ChEBI" id="CHEBI:74497"/>
        <dbReference type="EC" id="2.1.1.192"/>
    </reaction>
</comment>
<comment type="cofactor">
    <cofactor evidence="1">
        <name>[4Fe-4S] cluster</name>
        <dbReference type="ChEBI" id="CHEBI:49883"/>
    </cofactor>
    <text evidence="1">Binds 1 [4Fe-4S] cluster. The cluster is coordinated with 3 cysteines and an exchangeable S-adenosyl-L-methionine.</text>
</comment>
<comment type="subcellular location">
    <subcellularLocation>
        <location evidence="1">Cytoplasm</location>
    </subcellularLocation>
</comment>
<comment type="miscellaneous">
    <text evidence="1">Reaction proceeds by a ping-pong mechanism involving intermediate methylation of a conserved cysteine residue.</text>
</comment>
<comment type="similarity">
    <text evidence="1">Belongs to the radical SAM superfamily. RlmN family.</text>
</comment>
<organism>
    <name type="scientific">Streptococcus pneumoniae serotype 2 (strain D39 / NCTC 7466)</name>
    <dbReference type="NCBI Taxonomy" id="373153"/>
    <lineage>
        <taxon>Bacteria</taxon>
        <taxon>Bacillati</taxon>
        <taxon>Bacillota</taxon>
        <taxon>Bacilli</taxon>
        <taxon>Lactobacillales</taxon>
        <taxon>Streptococcaceae</taxon>
        <taxon>Streptococcus</taxon>
    </lineage>
</organism>
<proteinExistence type="inferred from homology"/>
<protein>
    <recommendedName>
        <fullName evidence="1">Probable dual-specificity RNA methyltransferase RlmN</fullName>
        <ecNumber evidence="1">2.1.1.192</ecNumber>
    </recommendedName>
    <alternativeName>
        <fullName evidence="1">23S rRNA (adenine(2503)-C(2))-methyltransferase</fullName>
    </alternativeName>
    <alternativeName>
        <fullName evidence="1">23S rRNA m2A2503 methyltransferase</fullName>
    </alternativeName>
    <alternativeName>
        <fullName evidence="1">Ribosomal RNA large subunit methyltransferase N</fullName>
    </alternativeName>
    <alternativeName>
        <fullName evidence="1">tRNA (adenine(37)-C(2))-methyltransferase</fullName>
    </alternativeName>
    <alternativeName>
        <fullName evidence="1">tRNA m2A37 methyltransferase</fullName>
    </alternativeName>
</protein>
<gene>
    <name evidence="1" type="primary">rlmN</name>
    <name type="ordered locus">SPD_0669</name>
</gene>
<name>RLMN_STRP2</name>
<feature type="chain" id="PRO_0000350457" description="Probable dual-specificity RNA methyltransferase RlmN">
    <location>
        <begin position="1"/>
        <end position="361"/>
    </location>
</feature>
<feature type="domain" description="Radical SAM core" evidence="2">
    <location>
        <begin position="97"/>
        <end position="329"/>
    </location>
</feature>
<feature type="active site" description="Proton acceptor" evidence="1">
    <location>
        <position position="91"/>
    </location>
</feature>
<feature type="active site" description="S-methylcysteine intermediate" evidence="1">
    <location>
        <position position="340"/>
    </location>
</feature>
<feature type="binding site" evidence="1">
    <location>
        <position position="111"/>
    </location>
    <ligand>
        <name>[4Fe-4S] cluster</name>
        <dbReference type="ChEBI" id="CHEBI:49883"/>
        <note>4Fe-4S-S-AdoMet</note>
    </ligand>
</feature>
<feature type="binding site" evidence="1">
    <location>
        <position position="115"/>
    </location>
    <ligand>
        <name>[4Fe-4S] cluster</name>
        <dbReference type="ChEBI" id="CHEBI:49883"/>
        <note>4Fe-4S-S-AdoMet</note>
    </ligand>
</feature>
<feature type="binding site" evidence="1">
    <location>
        <position position="118"/>
    </location>
    <ligand>
        <name>[4Fe-4S] cluster</name>
        <dbReference type="ChEBI" id="CHEBI:49883"/>
        <note>4Fe-4S-S-AdoMet</note>
    </ligand>
</feature>
<feature type="binding site" evidence="1">
    <location>
        <begin position="163"/>
        <end position="164"/>
    </location>
    <ligand>
        <name>S-adenosyl-L-methionine</name>
        <dbReference type="ChEBI" id="CHEBI:59789"/>
    </ligand>
</feature>
<feature type="binding site" evidence="1">
    <location>
        <position position="195"/>
    </location>
    <ligand>
        <name>S-adenosyl-L-methionine</name>
        <dbReference type="ChEBI" id="CHEBI:59789"/>
    </ligand>
</feature>
<feature type="binding site" evidence="1">
    <location>
        <begin position="218"/>
        <end position="220"/>
    </location>
    <ligand>
        <name>S-adenosyl-L-methionine</name>
        <dbReference type="ChEBI" id="CHEBI:59789"/>
    </ligand>
</feature>
<feature type="binding site" evidence="1">
    <location>
        <position position="296"/>
    </location>
    <ligand>
        <name>S-adenosyl-L-methionine</name>
        <dbReference type="ChEBI" id="CHEBI:59789"/>
    </ligand>
</feature>
<feature type="disulfide bond" description="(transient)" evidence="1">
    <location>
        <begin position="104"/>
        <end position="340"/>
    </location>
</feature>
<reference key="1">
    <citation type="journal article" date="2007" name="J. Bacteriol.">
        <title>Genome sequence of Avery's virulent serotype 2 strain D39 of Streptococcus pneumoniae and comparison with that of unencapsulated laboratory strain R6.</title>
        <authorList>
            <person name="Lanie J.A."/>
            <person name="Ng W.-L."/>
            <person name="Kazmierczak K.M."/>
            <person name="Andrzejewski T.M."/>
            <person name="Davidsen T.M."/>
            <person name="Wayne K.J."/>
            <person name="Tettelin H."/>
            <person name="Glass J.I."/>
            <person name="Winkler M.E."/>
        </authorList>
    </citation>
    <scope>NUCLEOTIDE SEQUENCE [LARGE SCALE GENOMIC DNA]</scope>
    <source>
        <strain>D39 / NCTC 7466</strain>
    </source>
</reference>
<dbReference type="EC" id="2.1.1.192" evidence="1"/>
<dbReference type="EMBL" id="CP000410">
    <property type="protein sequence ID" value="ABJ55163.1"/>
    <property type="molecule type" value="Genomic_DNA"/>
</dbReference>
<dbReference type="RefSeq" id="WP_000804635.1">
    <property type="nucleotide sequence ID" value="NZ_JAMLJR010000001.1"/>
</dbReference>
<dbReference type="SMR" id="Q04LD5"/>
<dbReference type="PaxDb" id="373153-SPD_0669"/>
<dbReference type="KEGG" id="spd:SPD_0669"/>
<dbReference type="eggNOG" id="COG0820">
    <property type="taxonomic scope" value="Bacteria"/>
</dbReference>
<dbReference type="HOGENOM" id="CLU_029101_0_1_9"/>
<dbReference type="BioCyc" id="SPNE373153:G1G6V-736-MONOMER"/>
<dbReference type="Proteomes" id="UP000001452">
    <property type="component" value="Chromosome"/>
</dbReference>
<dbReference type="GO" id="GO:0005737">
    <property type="term" value="C:cytoplasm"/>
    <property type="evidence" value="ECO:0007669"/>
    <property type="project" value="UniProtKB-SubCell"/>
</dbReference>
<dbReference type="GO" id="GO:0051539">
    <property type="term" value="F:4 iron, 4 sulfur cluster binding"/>
    <property type="evidence" value="ECO:0007669"/>
    <property type="project" value="UniProtKB-UniRule"/>
</dbReference>
<dbReference type="GO" id="GO:0046872">
    <property type="term" value="F:metal ion binding"/>
    <property type="evidence" value="ECO:0007669"/>
    <property type="project" value="UniProtKB-KW"/>
</dbReference>
<dbReference type="GO" id="GO:0070040">
    <property type="term" value="F:rRNA (adenine(2503)-C2-)-methyltransferase activity"/>
    <property type="evidence" value="ECO:0007669"/>
    <property type="project" value="UniProtKB-UniRule"/>
</dbReference>
<dbReference type="GO" id="GO:0019843">
    <property type="term" value="F:rRNA binding"/>
    <property type="evidence" value="ECO:0007669"/>
    <property type="project" value="UniProtKB-UniRule"/>
</dbReference>
<dbReference type="GO" id="GO:0002935">
    <property type="term" value="F:tRNA (adenine(37)-C2)-methyltransferase activity"/>
    <property type="evidence" value="ECO:0007669"/>
    <property type="project" value="UniProtKB-UniRule"/>
</dbReference>
<dbReference type="GO" id="GO:0000049">
    <property type="term" value="F:tRNA binding"/>
    <property type="evidence" value="ECO:0007669"/>
    <property type="project" value="UniProtKB-UniRule"/>
</dbReference>
<dbReference type="GO" id="GO:0070475">
    <property type="term" value="P:rRNA base methylation"/>
    <property type="evidence" value="ECO:0007669"/>
    <property type="project" value="UniProtKB-UniRule"/>
</dbReference>
<dbReference type="GO" id="GO:0030488">
    <property type="term" value="P:tRNA methylation"/>
    <property type="evidence" value="ECO:0007669"/>
    <property type="project" value="UniProtKB-UniRule"/>
</dbReference>
<dbReference type="CDD" id="cd01335">
    <property type="entry name" value="Radical_SAM"/>
    <property type="match status" value="1"/>
</dbReference>
<dbReference type="FunFam" id="1.10.150.530:FF:000002">
    <property type="entry name" value="Probable dual-specificity RNA methyltransferase RlmN"/>
    <property type="match status" value="1"/>
</dbReference>
<dbReference type="FunFam" id="3.20.20.70:FF:000014">
    <property type="entry name" value="Probable dual-specificity RNA methyltransferase RlmN"/>
    <property type="match status" value="1"/>
</dbReference>
<dbReference type="Gene3D" id="1.10.150.530">
    <property type="match status" value="1"/>
</dbReference>
<dbReference type="Gene3D" id="3.20.20.70">
    <property type="entry name" value="Aldolase class I"/>
    <property type="match status" value="1"/>
</dbReference>
<dbReference type="HAMAP" id="MF_01849">
    <property type="entry name" value="RNA_methyltr_RlmN"/>
    <property type="match status" value="1"/>
</dbReference>
<dbReference type="InterPro" id="IPR013785">
    <property type="entry name" value="Aldolase_TIM"/>
</dbReference>
<dbReference type="InterPro" id="IPR040072">
    <property type="entry name" value="Methyltransferase_A"/>
</dbReference>
<dbReference type="InterPro" id="IPR048641">
    <property type="entry name" value="RlmN_N"/>
</dbReference>
<dbReference type="InterPro" id="IPR027492">
    <property type="entry name" value="RNA_MTrfase_RlmN"/>
</dbReference>
<dbReference type="InterPro" id="IPR004383">
    <property type="entry name" value="rRNA_lsu_MTrfase_RlmN/Cfr"/>
</dbReference>
<dbReference type="InterPro" id="IPR007197">
    <property type="entry name" value="rSAM"/>
</dbReference>
<dbReference type="NCBIfam" id="TIGR00048">
    <property type="entry name" value="rRNA_mod_RlmN"/>
    <property type="match status" value="1"/>
</dbReference>
<dbReference type="PANTHER" id="PTHR30544">
    <property type="entry name" value="23S RRNA METHYLTRANSFERASE"/>
    <property type="match status" value="1"/>
</dbReference>
<dbReference type="PANTHER" id="PTHR30544:SF5">
    <property type="entry name" value="RADICAL SAM CORE DOMAIN-CONTAINING PROTEIN"/>
    <property type="match status" value="1"/>
</dbReference>
<dbReference type="Pfam" id="PF04055">
    <property type="entry name" value="Radical_SAM"/>
    <property type="match status" value="1"/>
</dbReference>
<dbReference type="Pfam" id="PF21016">
    <property type="entry name" value="RlmN_N"/>
    <property type="match status" value="1"/>
</dbReference>
<dbReference type="PIRSF" id="PIRSF006004">
    <property type="entry name" value="CHP00048"/>
    <property type="match status" value="1"/>
</dbReference>
<dbReference type="SFLD" id="SFLDF00275">
    <property type="entry name" value="adenosine_C2_methyltransferase"/>
    <property type="match status" value="1"/>
</dbReference>
<dbReference type="SFLD" id="SFLDS00029">
    <property type="entry name" value="Radical_SAM"/>
    <property type="match status" value="1"/>
</dbReference>
<dbReference type="SUPFAM" id="SSF102114">
    <property type="entry name" value="Radical SAM enzymes"/>
    <property type="match status" value="1"/>
</dbReference>
<dbReference type="PROSITE" id="PS51918">
    <property type="entry name" value="RADICAL_SAM"/>
    <property type="match status" value="1"/>
</dbReference>
<keyword id="KW-0004">4Fe-4S</keyword>
<keyword id="KW-0963">Cytoplasm</keyword>
<keyword id="KW-1015">Disulfide bond</keyword>
<keyword id="KW-0408">Iron</keyword>
<keyword id="KW-0411">Iron-sulfur</keyword>
<keyword id="KW-0479">Metal-binding</keyword>
<keyword id="KW-0489">Methyltransferase</keyword>
<keyword id="KW-1185">Reference proteome</keyword>
<keyword id="KW-0698">rRNA processing</keyword>
<keyword id="KW-0949">S-adenosyl-L-methionine</keyword>
<keyword id="KW-0808">Transferase</keyword>
<keyword id="KW-0819">tRNA processing</keyword>
<evidence type="ECO:0000255" key="1">
    <source>
        <dbReference type="HAMAP-Rule" id="MF_01849"/>
    </source>
</evidence>
<evidence type="ECO:0000255" key="2">
    <source>
        <dbReference type="PROSITE-ProRule" id="PRU01266"/>
    </source>
</evidence>